<protein>
    <recommendedName>
        <fullName>Coxsackievirus and adenovirus receptor homolog</fullName>
        <shortName>CAR</shortName>
    </recommendedName>
</protein>
<evidence type="ECO:0000250" key="1"/>
<evidence type="ECO:0000250" key="2">
    <source>
        <dbReference type="UniProtKB" id="P78310"/>
    </source>
</evidence>
<evidence type="ECO:0000250" key="3">
    <source>
        <dbReference type="UniProtKB" id="P97792"/>
    </source>
</evidence>
<evidence type="ECO:0000255" key="4"/>
<evidence type="ECO:0000255" key="5">
    <source>
        <dbReference type="PROSITE-ProRule" id="PRU00114"/>
    </source>
</evidence>
<evidence type="ECO:0000256" key="6">
    <source>
        <dbReference type="SAM" id="MobiDB-lite"/>
    </source>
</evidence>
<name>CXAR_PONAB</name>
<proteinExistence type="evidence at transcript level"/>
<reference key="1">
    <citation type="submission" date="2004-11" db="EMBL/GenBank/DDBJ databases">
        <authorList>
            <consortium name="The German cDNA consortium"/>
        </authorList>
    </citation>
    <scope>NUCLEOTIDE SEQUENCE [LARGE SCALE MRNA]</scope>
    <source>
        <tissue>Heart</tissue>
    </source>
</reference>
<keyword id="KW-0130">Cell adhesion</keyword>
<keyword id="KW-0965">Cell junction</keyword>
<keyword id="KW-1003">Cell membrane</keyword>
<keyword id="KW-1015">Disulfide bond</keyword>
<keyword id="KW-0325">Glycoprotein</keyword>
<keyword id="KW-0393">Immunoglobulin domain</keyword>
<keyword id="KW-0449">Lipoprotein</keyword>
<keyword id="KW-0472">Membrane</keyword>
<keyword id="KW-0564">Palmitate</keyword>
<keyword id="KW-0597">Phosphoprotein</keyword>
<keyword id="KW-0675">Receptor</keyword>
<keyword id="KW-1185">Reference proteome</keyword>
<keyword id="KW-0677">Repeat</keyword>
<keyword id="KW-0732">Signal</keyword>
<keyword id="KW-0796">Tight junction</keyword>
<keyword id="KW-0812">Transmembrane</keyword>
<keyword id="KW-1133">Transmembrane helix</keyword>
<comment type="function">
    <text evidence="1">Component of the epithelial apical junction complex that may function as a homophilic cell adhesion molecule and is essential for tight junction integrity. Also involved in transepithelial migration of leukocytes through adhesive interactions with JAML a transmembrane protein of the plasma membrane of leukocytes. The interaction between both receptors also mediates the activation of gamma-delta T-cells, a subpopulation of T-cells residing in epithelia and involved in tissue homeostasis and repair. Upon epithelial CXADR-binding, JAML induces downstream cell signaling events in gamma-delta T-cells through PI3-kinase and MAP kinases. It results in proliferation and production of cytokines and growth factors by T-cells that in turn stimulate epithelial tissues repair (By similarity).</text>
</comment>
<comment type="subunit">
    <text evidence="1">Monomer. May form homodimer. Interacts with LNX, MAGI1, DLG4, PRKCABP, TJP1 and CTNNB1. Interacts with MPDZ; recruits MPDZ to intercellular contact sites. Interacts with JAML (homodimeric form) (By similarity).</text>
</comment>
<comment type="subcellular location">
    <subcellularLocation>
        <location evidence="2">Cell membrane</location>
        <topology evidence="4">Single-pass type I membrane protein</topology>
    </subcellularLocation>
    <subcellularLocation>
        <location evidence="2">Basolateral cell membrane</location>
        <topology evidence="4">Single-pass type I membrane protein</topology>
    </subcellularLocation>
    <subcellularLocation>
        <location evidence="2">Cell junction</location>
        <location evidence="2">Tight junction</location>
    </subcellularLocation>
    <subcellularLocation>
        <location evidence="2">Cell junction</location>
        <location evidence="2">Adherens junction</location>
    </subcellularLocation>
    <text evidence="2">In epithelial cells localizes to the apical junction complex composed of tight and adherens junctions. In airway epithelial cells localized to basolateral membrane but not to apical surface.</text>
</comment>
<comment type="domain">
    <text evidence="1">The Ig-like C2-type 1 domain mediates homodimerization and interaction with JAML.</text>
</comment>
<comment type="domain">
    <text evidence="1">The PDZ-binding motif mediates interaction with MPDZ and MAGI1.</text>
</comment>
<comment type="PTM">
    <text evidence="1">N-glycosylated.</text>
</comment>
<comment type="PTM">
    <text evidence="1">Palmitoylated on Cys-259 and/or Cys-260; required for proper localization to the plasma membrane.</text>
</comment>
<feature type="signal peptide" evidence="4">
    <location>
        <begin position="1"/>
        <end position="19"/>
    </location>
</feature>
<feature type="chain" id="PRO_0000014741" description="Coxsackievirus and adenovirus receptor homolog">
    <location>
        <begin position="20"/>
        <end position="365"/>
    </location>
</feature>
<feature type="topological domain" description="Extracellular" evidence="4">
    <location>
        <begin position="20"/>
        <end position="237"/>
    </location>
</feature>
<feature type="transmembrane region" description="Helical" evidence="4">
    <location>
        <begin position="238"/>
        <end position="258"/>
    </location>
</feature>
<feature type="topological domain" description="Cytoplasmic" evidence="4">
    <location>
        <begin position="259"/>
        <end position="365"/>
    </location>
</feature>
<feature type="domain" description="Ig-like C2-type 1">
    <location>
        <begin position="20"/>
        <end position="134"/>
    </location>
</feature>
<feature type="domain" description="Ig-like C2-type 2">
    <location>
        <begin position="141"/>
        <end position="228"/>
    </location>
</feature>
<feature type="region of interest" description="Disordered" evidence="6">
    <location>
        <begin position="269"/>
        <end position="343"/>
    </location>
</feature>
<feature type="short sequence motif" description="PDZ-binding" evidence="1">
    <location>
        <begin position="360"/>
        <end position="365"/>
    </location>
</feature>
<feature type="compositionally biased region" description="Basic and acidic residues" evidence="6">
    <location>
        <begin position="269"/>
        <end position="282"/>
    </location>
</feature>
<feature type="compositionally biased region" description="Polar residues" evidence="6">
    <location>
        <begin position="286"/>
        <end position="322"/>
    </location>
</feature>
<feature type="modified residue" description="Phosphoserine" evidence="3">
    <location>
        <position position="297"/>
    </location>
</feature>
<feature type="modified residue" description="Phosphoserine" evidence="3">
    <location>
        <position position="304"/>
    </location>
</feature>
<feature type="modified residue" description="Phosphoserine" evidence="2">
    <location>
        <position position="306"/>
    </location>
</feature>
<feature type="modified residue" description="Phosphoserine" evidence="2">
    <location>
        <position position="323"/>
    </location>
</feature>
<feature type="modified residue" description="Phosphoserine" evidence="2">
    <location>
        <position position="332"/>
    </location>
</feature>
<feature type="modified residue" description="Phosphoserine" evidence="3">
    <location>
        <position position="363"/>
    </location>
</feature>
<feature type="lipid moiety-binding region" description="S-palmitoyl cysteine" evidence="1">
    <location>
        <position position="259"/>
    </location>
</feature>
<feature type="lipid moiety-binding region" description="S-palmitoyl cysteine" evidence="1">
    <location>
        <position position="260"/>
    </location>
</feature>
<feature type="glycosylation site" description="N-linked (GlcNAc...) asparagine" evidence="4">
    <location>
        <position position="106"/>
    </location>
</feature>
<feature type="disulfide bond" evidence="5">
    <location>
        <begin position="41"/>
        <end position="120"/>
    </location>
</feature>
<feature type="disulfide bond" evidence="5">
    <location>
        <begin position="146"/>
        <end position="223"/>
    </location>
</feature>
<feature type="disulfide bond" evidence="5">
    <location>
        <begin position="162"/>
        <end position="212"/>
    </location>
</feature>
<gene>
    <name type="primary">CXADR</name>
    <name type="synonym">CAR</name>
</gene>
<dbReference type="EMBL" id="CR860254">
    <property type="protein sequence ID" value="CAH92396.1"/>
    <property type="molecule type" value="mRNA"/>
</dbReference>
<dbReference type="RefSeq" id="NP_001127547.1">
    <property type="nucleotide sequence ID" value="NM_001134075.1"/>
</dbReference>
<dbReference type="BMRB" id="Q5R764"/>
<dbReference type="SMR" id="Q5R764"/>
<dbReference type="FunCoup" id="Q5R764">
    <property type="interactions" value="485"/>
</dbReference>
<dbReference type="STRING" id="9601.ENSPPYP00000012617"/>
<dbReference type="GlyCosmos" id="Q5R764">
    <property type="glycosylation" value="1 site, No reported glycans"/>
</dbReference>
<dbReference type="GeneID" id="100174624"/>
<dbReference type="KEGG" id="pon:100174624"/>
<dbReference type="CTD" id="1525"/>
<dbReference type="eggNOG" id="ENOG502QSG0">
    <property type="taxonomic scope" value="Eukaryota"/>
</dbReference>
<dbReference type="InParanoid" id="Q5R764"/>
<dbReference type="OrthoDB" id="8902063at2759"/>
<dbReference type="Proteomes" id="UP000001595">
    <property type="component" value="Unplaced"/>
</dbReference>
<dbReference type="GO" id="GO:0001669">
    <property type="term" value="C:acrosomal vesicle"/>
    <property type="evidence" value="ECO:0000250"/>
    <property type="project" value="UniProtKB"/>
</dbReference>
<dbReference type="GO" id="GO:0005912">
    <property type="term" value="C:adherens junction"/>
    <property type="evidence" value="ECO:0000250"/>
    <property type="project" value="UniProtKB"/>
</dbReference>
<dbReference type="GO" id="GO:0016327">
    <property type="term" value="C:apicolateral plasma membrane"/>
    <property type="evidence" value="ECO:0000250"/>
    <property type="project" value="UniProtKB"/>
</dbReference>
<dbReference type="GO" id="GO:0016323">
    <property type="term" value="C:basolateral plasma membrane"/>
    <property type="evidence" value="ECO:0007669"/>
    <property type="project" value="UniProtKB-SubCell"/>
</dbReference>
<dbReference type="GO" id="GO:0005923">
    <property type="term" value="C:bicellular tight junction"/>
    <property type="evidence" value="ECO:0007669"/>
    <property type="project" value="UniProtKB-SubCell"/>
</dbReference>
<dbReference type="GO" id="GO:0044297">
    <property type="term" value="C:cell body"/>
    <property type="evidence" value="ECO:0000250"/>
    <property type="project" value="UniProtKB"/>
</dbReference>
<dbReference type="GO" id="GO:0005737">
    <property type="term" value="C:cytoplasm"/>
    <property type="evidence" value="ECO:0000250"/>
    <property type="project" value="UniProtKB"/>
</dbReference>
<dbReference type="GO" id="GO:0030175">
    <property type="term" value="C:filopodium"/>
    <property type="evidence" value="ECO:0000250"/>
    <property type="project" value="UniProtKB"/>
</dbReference>
<dbReference type="GO" id="GO:0030426">
    <property type="term" value="C:growth cone"/>
    <property type="evidence" value="ECO:0000250"/>
    <property type="project" value="UniProtKB"/>
</dbReference>
<dbReference type="GO" id="GO:0014704">
    <property type="term" value="C:intercalated disc"/>
    <property type="evidence" value="ECO:0007669"/>
    <property type="project" value="TreeGrafter"/>
</dbReference>
<dbReference type="GO" id="GO:0045121">
    <property type="term" value="C:membrane raft"/>
    <property type="evidence" value="ECO:0000250"/>
    <property type="project" value="UniProtKB"/>
</dbReference>
<dbReference type="GO" id="GO:0043005">
    <property type="term" value="C:neuron projection"/>
    <property type="evidence" value="ECO:0000250"/>
    <property type="project" value="UniProtKB"/>
</dbReference>
<dbReference type="GO" id="GO:0005634">
    <property type="term" value="C:nucleus"/>
    <property type="evidence" value="ECO:0000250"/>
    <property type="project" value="UniProtKB"/>
</dbReference>
<dbReference type="GO" id="GO:0005886">
    <property type="term" value="C:plasma membrane"/>
    <property type="evidence" value="ECO:0000250"/>
    <property type="project" value="UniProtKB"/>
</dbReference>
<dbReference type="GO" id="GO:0008013">
    <property type="term" value="F:beta-catenin binding"/>
    <property type="evidence" value="ECO:0000250"/>
    <property type="project" value="UniProtKB"/>
</dbReference>
<dbReference type="GO" id="GO:0050839">
    <property type="term" value="F:cell adhesion molecule binding"/>
    <property type="evidence" value="ECO:0000250"/>
    <property type="project" value="UniProtKB"/>
</dbReference>
<dbReference type="GO" id="GO:0071253">
    <property type="term" value="F:connexin binding"/>
    <property type="evidence" value="ECO:0000250"/>
    <property type="project" value="UniProtKB"/>
</dbReference>
<dbReference type="GO" id="GO:0030165">
    <property type="term" value="F:PDZ domain binding"/>
    <property type="evidence" value="ECO:0000250"/>
    <property type="project" value="UniProtKB"/>
</dbReference>
<dbReference type="GO" id="GO:0030036">
    <property type="term" value="P:actin cytoskeleton organization"/>
    <property type="evidence" value="ECO:0000250"/>
    <property type="project" value="UniProtKB"/>
</dbReference>
<dbReference type="GO" id="GO:0086067">
    <property type="term" value="P:AV node cell to bundle of His cell communication"/>
    <property type="evidence" value="ECO:0000250"/>
    <property type="project" value="UniProtKB"/>
</dbReference>
<dbReference type="GO" id="GO:0055013">
    <property type="term" value="P:cardiac muscle cell development"/>
    <property type="evidence" value="ECO:0000250"/>
    <property type="project" value="UniProtKB"/>
</dbReference>
<dbReference type="GO" id="GO:0045216">
    <property type="term" value="P:cell-cell junction organization"/>
    <property type="evidence" value="ECO:0000250"/>
    <property type="project" value="UniProtKB"/>
</dbReference>
<dbReference type="GO" id="GO:0010669">
    <property type="term" value="P:epithelial structure maintenance"/>
    <property type="evidence" value="ECO:0000250"/>
    <property type="project" value="UniProtKB"/>
</dbReference>
<dbReference type="GO" id="GO:0046629">
    <property type="term" value="P:gamma-delta T cell activation"/>
    <property type="evidence" value="ECO:0000250"/>
    <property type="project" value="UniProtKB"/>
</dbReference>
<dbReference type="GO" id="GO:0008354">
    <property type="term" value="P:germ cell migration"/>
    <property type="evidence" value="ECO:0000250"/>
    <property type="project" value="UniProtKB"/>
</dbReference>
<dbReference type="GO" id="GO:0007507">
    <property type="term" value="P:heart development"/>
    <property type="evidence" value="ECO:0000250"/>
    <property type="project" value="UniProtKB"/>
</dbReference>
<dbReference type="GO" id="GO:0007157">
    <property type="term" value="P:heterophilic cell-cell adhesion via plasma membrane cell adhesion molecules"/>
    <property type="evidence" value="ECO:0000250"/>
    <property type="project" value="UniProtKB"/>
</dbReference>
<dbReference type="GO" id="GO:0034109">
    <property type="term" value="P:homotypic cell-cell adhesion"/>
    <property type="evidence" value="ECO:0000250"/>
    <property type="project" value="UniProtKB"/>
</dbReference>
<dbReference type="GO" id="GO:0007005">
    <property type="term" value="P:mitochondrion organization"/>
    <property type="evidence" value="ECO:0000250"/>
    <property type="project" value="UniProtKB"/>
</dbReference>
<dbReference type="GO" id="GO:0030593">
    <property type="term" value="P:neutrophil chemotaxis"/>
    <property type="evidence" value="ECO:0000250"/>
    <property type="project" value="UniProtKB"/>
</dbReference>
<dbReference type="CDD" id="cd20960">
    <property type="entry name" value="IgV_CAR_like"/>
    <property type="match status" value="1"/>
</dbReference>
<dbReference type="FunFam" id="2.60.40.10:FF:000493">
    <property type="entry name" value="Coxsackievirus and adenovirus receptor homolog"/>
    <property type="match status" value="1"/>
</dbReference>
<dbReference type="FunFam" id="2.60.40.10:FF:000095">
    <property type="entry name" value="immunoglobulin superfamily member 11 isoform X1"/>
    <property type="match status" value="1"/>
</dbReference>
<dbReference type="Gene3D" id="2.60.40.10">
    <property type="entry name" value="Immunoglobulins"/>
    <property type="match status" value="2"/>
</dbReference>
<dbReference type="InterPro" id="IPR052307">
    <property type="entry name" value="EJ_Adhesion_Regulator"/>
</dbReference>
<dbReference type="InterPro" id="IPR007110">
    <property type="entry name" value="Ig-like_dom"/>
</dbReference>
<dbReference type="InterPro" id="IPR036179">
    <property type="entry name" value="Ig-like_dom_sf"/>
</dbReference>
<dbReference type="InterPro" id="IPR013783">
    <property type="entry name" value="Ig-like_fold"/>
</dbReference>
<dbReference type="InterPro" id="IPR003599">
    <property type="entry name" value="Ig_sub"/>
</dbReference>
<dbReference type="InterPro" id="IPR003598">
    <property type="entry name" value="Ig_sub2"/>
</dbReference>
<dbReference type="InterPro" id="IPR013106">
    <property type="entry name" value="Ig_V-set"/>
</dbReference>
<dbReference type="PANTHER" id="PTHR44468:SF3">
    <property type="entry name" value="COXSACKIEVIRUS AND ADENOVIRUS RECEPTOR"/>
    <property type="match status" value="1"/>
</dbReference>
<dbReference type="PANTHER" id="PTHR44468">
    <property type="entry name" value="COXSACKIEVIRUS AND ADENOVIRUS RECEPTOR-RELATED"/>
    <property type="match status" value="1"/>
</dbReference>
<dbReference type="Pfam" id="PF13927">
    <property type="entry name" value="Ig_3"/>
    <property type="match status" value="1"/>
</dbReference>
<dbReference type="Pfam" id="PF07686">
    <property type="entry name" value="V-set"/>
    <property type="match status" value="1"/>
</dbReference>
<dbReference type="SMART" id="SM00409">
    <property type="entry name" value="IG"/>
    <property type="match status" value="2"/>
</dbReference>
<dbReference type="SMART" id="SM00408">
    <property type="entry name" value="IGc2"/>
    <property type="match status" value="2"/>
</dbReference>
<dbReference type="SMART" id="SM00406">
    <property type="entry name" value="IGv"/>
    <property type="match status" value="1"/>
</dbReference>
<dbReference type="SUPFAM" id="SSF48726">
    <property type="entry name" value="Immunoglobulin"/>
    <property type="match status" value="2"/>
</dbReference>
<dbReference type="PROSITE" id="PS50835">
    <property type="entry name" value="IG_LIKE"/>
    <property type="match status" value="2"/>
</dbReference>
<accession>Q5R764</accession>
<organism>
    <name type="scientific">Pongo abelii</name>
    <name type="common">Sumatran orangutan</name>
    <name type="synonym">Pongo pygmaeus abelii</name>
    <dbReference type="NCBI Taxonomy" id="9601"/>
    <lineage>
        <taxon>Eukaryota</taxon>
        <taxon>Metazoa</taxon>
        <taxon>Chordata</taxon>
        <taxon>Craniata</taxon>
        <taxon>Vertebrata</taxon>
        <taxon>Euteleostomi</taxon>
        <taxon>Mammalia</taxon>
        <taxon>Eutheria</taxon>
        <taxon>Euarchontoglires</taxon>
        <taxon>Primates</taxon>
        <taxon>Haplorrhini</taxon>
        <taxon>Catarrhini</taxon>
        <taxon>Hominidae</taxon>
        <taxon>Pongo</taxon>
    </lineage>
</organism>
<sequence>MALLLCFVLLCGVVDFARSLSITTPEEMIEKAKGETAYLPCKFTLSPEDQGPLDIEWLISPADNQKVDQVIILYSGDKIYDDYYPDLKGRVHFTSNDLKSGDASINVTNLQLSDIGTYQCKVKKAPGVANKKIHLVVLVKPSGARCYVDGSEEIGSDFKIKCEPKEGSLPLQYEWQKLSDSQKMPTSWLAEMTSSVISVKNASSEYSGTYSCTVRNRVGSDQCLLRLNVVPPSNKAGLIAGAIIGTLLALALIGLIIFCCRKKRREEKYEKEVHHDIREDVPPPKSRTSTARSYIGSNHSSLGSMSPSNMEGYSKTQYNQVPSEDFERTPQSPTLPPAKVAAPNLSRMGAIPVMIPAQSKDGSIV</sequence>